<accession>P50498</accession>
<accession>A0A143ZX41</accession>
<accession>Q9TY97</accession>
<gene>
    <name evidence="11" type="primary">MSP2</name>
    <name evidence="12" type="synonym">MSA2</name>
    <name type="ORF">PF3D7_0206800</name>
    <name type="ORF">PFB0300c</name>
</gene>
<comment type="function">
    <text evidence="5 7">May play a role in the merozoite attachment to the erythrocyte.</text>
</comment>
<comment type="subcellular location">
    <subcellularLocation>
        <location evidence="7 9">Cell membrane</location>
        <topology evidence="1">Lipid-anchor</topology>
        <topology evidence="1">GPI-anchor</topology>
    </subcellularLocation>
    <text evidence="9">During host erythrocyte invasion by merozoites, carried into invaded erythrocytes where it is rapidly degraded.</text>
</comment>
<comment type="developmental stage">
    <text evidence="7 9">Expressed during the asexual blood stage, including at the schizont stage and in free merozoites (at protein level).</text>
</comment>
<comment type="domain">
    <text evidence="6">The N-terminal region appears to be involved in lipid binding.</text>
</comment>
<comment type="polymorphism">
    <text evidence="8">The sequence varies across Plasmodium strains (PubMed:2181307). All variants share conserved N- and C-terminal regions; however, they belong to two allelic families, represented by 3D7 strain and FC27 strain sequences respectively, distinguished by tandem repeats and dimorphic flanking sequences within the central region of the protein (PubMed:2181307).</text>
</comment>
<comment type="biotechnology">
    <text evidence="7 9 10">Potential candidate for the development of parasite blood stage vaccines (PubMed:19428875, PubMed:28189425). In vivo, induces antibodies capable of inhibiting parasite growth in the host (PubMed:19428875). In vitro, antibodies to MSP2 do not appear to inhibit invasion directly but may function to opsonize merozoites and promote antibody-dependent cellular inhibition mediated by host monocytes (PubMed:19428875, PubMed:24218484). The ability of merozoites to carry antibodies bound to MSP2 into the invaded host erythrocyte without apparent disruption of invasion or growth may represent an adaption of the parasite to render antibodies to the merozoite surface non-functional, thereby contributing to immune evasion (PubMed:24218484).</text>
</comment>
<organism>
    <name type="scientific">Plasmodium falciparum (isolate 3D7)</name>
    <dbReference type="NCBI Taxonomy" id="36329"/>
    <lineage>
        <taxon>Eukaryota</taxon>
        <taxon>Sar</taxon>
        <taxon>Alveolata</taxon>
        <taxon>Apicomplexa</taxon>
        <taxon>Aconoidasida</taxon>
        <taxon>Haemosporida</taxon>
        <taxon>Plasmodiidae</taxon>
        <taxon>Plasmodium</taxon>
        <taxon>Plasmodium (Laverania)</taxon>
    </lineage>
</organism>
<evidence type="ECO:0000250" key="1">
    <source>
        <dbReference type="UniProtKB" id="P19260"/>
    </source>
</evidence>
<evidence type="ECO:0000250" key="2">
    <source>
        <dbReference type="UniProtKB" id="P19599"/>
    </source>
</evidence>
<evidence type="ECO:0000255" key="3"/>
<evidence type="ECO:0000256" key="4">
    <source>
        <dbReference type="SAM" id="MobiDB-lite"/>
    </source>
</evidence>
<evidence type="ECO:0000269" key="5">
    <source>
    </source>
</evidence>
<evidence type="ECO:0000269" key="6">
    <source>
    </source>
</evidence>
<evidence type="ECO:0000269" key="7">
    <source>
    </source>
</evidence>
<evidence type="ECO:0000269" key="8">
    <source>
    </source>
</evidence>
<evidence type="ECO:0000269" key="9">
    <source>
    </source>
</evidence>
<evidence type="ECO:0000269" key="10">
    <source>
    </source>
</evidence>
<evidence type="ECO:0000303" key="11">
    <source>
    </source>
</evidence>
<evidence type="ECO:0000303" key="12">
    <source>
    </source>
</evidence>
<evidence type="ECO:0000305" key="13"/>
<evidence type="ECO:0007744" key="14">
    <source>
        <dbReference type="PDB" id="2MU8"/>
    </source>
</evidence>
<evidence type="ECO:0007744" key="15">
    <source>
        <dbReference type="PDB" id="4QY8"/>
    </source>
</evidence>
<evidence type="ECO:0007744" key="16">
    <source>
        <dbReference type="PDB" id="4QYO"/>
    </source>
</evidence>
<evidence type="ECO:0007744" key="17">
    <source>
        <dbReference type="PDB" id="4R3S"/>
    </source>
</evidence>
<evidence type="ECO:0007744" key="18">
    <source>
        <dbReference type="PDB" id="5TBD"/>
    </source>
</evidence>
<evidence type="ECO:0007829" key="19">
    <source>
        <dbReference type="PDB" id="2MU8"/>
    </source>
</evidence>
<evidence type="ECO:0007829" key="20">
    <source>
        <dbReference type="PDB" id="4QYO"/>
    </source>
</evidence>
<evidence type="ECO:0007829" key="21">
    <source>
        <dbReference type="PDB" id="5TBD"/>
    </source>
</evidence>
<keyword id="KW-0002">3D-structure</keyword>
<keyword id="KW-1003">Cell membrane</keyword>
<keyword id="KW-1015">Disulfide bond</keyword>
<keyword id="KW-0325">Glycoprotein</keyword>
<keyword id="KW-0336">GPI-anchor</keyword>
<keyword id="KW-0449">Lipoprotein</keyword>
<keyword id="KW-0461">Malaria</keyword>
<keyword id="KW-0472">Membrane</keyword>
<keyword id="KW-0477">Merozoite</keyword>
<keyword id="KW-1185">Reference proteome</keyword>
<keyword id="KW-0677">Repeat</keyword>
<keyword id="KW-0732">Signal</keyword>
<feature type="signal peptide" evidence="3">
    <location>
        <begin position="1"/>
        <end position="20"/>
    </location>
</feature>
<feature type="chain" id="PRO_0000024584" description="Merozoite surface protein 2">
    <location>
        <begin position="21"/>
        <end position="246"/>
    </location>
</feature>
<feature type="propeptide" id="PRO_0000024585" description="Removed in mature form" evidence="1">
    <location>
        <begin position="247"/>
        <end position="272"/>
    </location>
</feature>
<feature type="repeat" description="1" evidence="8">
    <location>
        <begin position="53"/>
        <end position="56"/>
    </location>
</feature>
<feature type="repeat" description="2" evidence="8">
    <location>
        <begin position="57"/>
        <end position="60"/>
    </location>
</feature>
<feature type="repeat" description="3" evidence="8">
    <location>
        <begin position="61"/>
        <end position="64"/>
    </location>
</feature>
<feature type="repeat" description="4" evidence="8">
    <location>
        <begin position="65"/>
        <end position="68"/>
    </location>
</feature>
<feature type="repeat" description="5" evidence="8">
    <location>
        <begin position="69"/>
        <end position="72"/>
    </location>
</feature>
<feature type="repeat" description="6" evidence="8">
    <location>
        <begin position="73"/>
        <end position="76"/>
    </location>
</feature>
<feature type="region of interest" description="Polymorphic region" evidence="8">
    <location>
        <begin position="44"/>
        <end position="198"/>
    </location>
</feature>
<feature type="region of interest" description="Disordered" evidence="4">
    <location>
        <begin position="45"/>
        <end position="233"/>
    </location>
</feature>
<feature type="region of interest" description="6 X 4 AA tandem repeats of G-G-S-A" evidence="8">
    <location>
        <begin position="53"/>
        <end position="76"/>
    </location>
</feature>
<feature type="compositionally biased region" description="Gly residues" evidence="4">
    <location>
        <begin position="51"/>
        <end position="82"/>
    </location>
</feature>
<feature type="compositionally biased region" description="Low complexity" evidence="4">
    <location>
        <begin position="83"/>
        <end position="119"/>
    </location>
</feature>
<feature type="compositionally biased region" description="Basic and acidic residues" evidence="4">
    <location>
        <begin position="122"/>
        <end position="137"/>
    </location>
</feature>
<feature type="compositionally biased region" description="Polar residues" evidence="4">
    <location>
        <begin position="139"/>
        <end position="165"/>
    </location>
</feature>
<feature type="compositionally biased region" description="Polar residues" evidence="4">
    <location>
        <begin position="172"/>
        <end position="200"/>
    </location>
</feature>
<feature type="lipid moiety-binding region" description="GPI-anchor amidated asparagine" evidence="1">
    <location>
        <position position="246"/>
    </location>
</feature>
<feature type="glycosylation site" description="N-linked (GlcNAc...) asparagine" evidence="3">
    <location>
        <position position="22"/>
    </location>
</feature>
<feature type="glycosylation site" description="N-linked (GlcNAc...) asparagine" evidence="3">
    <location>
        <position position="36"/>
    </location>
</feature>
<feature type="glycosylation site" description="N-linked (GlcNAc...) asparagine" evidence="3">
    <location>
        <position position="149"/>
    </location>
</feature>
<feature type="glycosylation site" description="N-linked (GlcNAc...) asparagine" evidence="3">
    <location>
        <position position="221"/>
    </location>
</feature>
<feature type="glycosylation site" description="N-linked (GlcNAc...) asparagine" evidence="3">
    <location>
        <position position="245"/>
    </location>
</feature>
<feature type="glycosylation site" description="N-linked (GlcNAc...) asparagine" evidence="3">
    <location>
        <position position="246"/>
    </location>
</feature>
<feature type="disulfide bond" evidence="2">
    <location>
        <begin position="229"/>
        <end position="237"/>
    </location>
</feature>
<feature type="sequence conflict" description="In Ref. 1; AAA29686." evidence="13" ref="1">
    <original>S</original>
    <variation>T</variation>
    <location>
        <position position="55"/>
    </location>
</feature>
<feature type="turn" evidence="19">
    <location>
        <begin position="27"/>
        <end position="30"/>
    </location>
</feature>
<feature type="helix" evidence="20">
    <location>
        <begin position="34"/>
        <end position="37"/>
    </location>
</feature>
<feature type="turn" evidence="21">
    <location>
        <begin position="234"/>
        <end position="237"/>
    </location>
</feature>
<protein>
    <recommendedName>
        <fullName evidence="11">Merozoite surface protein 2</fullName>
    </recommendedName>
    <alternativeName>
        <fullName evidence="12">45 kDa merozoite surface antigen</fullName>
    </alternativeName>
    <alternativeName>
        <fullName evidence="12">Merozoite surface antigen 2</fullName>
        <shortName evidence="12">MSA-2</shortName>
    </alternativeName>
</protein>
<dbReference type="EMBL" id="M28891">
    <property type="protein sequence ID" value="AAA29686.1"/>
    <property type="molecule type" value="Genomic_DNA"/>
</dbReference>
<dbReference type="EMBL" id="LN999943">
    <property type="protein sequence ID" value="CZT98080.1"/>
    <property type="molecule type" value="Genomic_DNA"/>
</dbReference>
<dbReference type="PIR" id="G71618">
    <property type="entry name" value="G71618"/>
</dbReference>
<dbReference type="RefSeq" id="XP_001349578.1">
    <property type="nucleotide sequence ID" value="XM_001349542.1"/>
</dbReference>
<dbReference type="PDB" id="2MU8">
    <property type="method" value="NMR"/>
    <property type="chains" value="A=21-40"/>
</dbReference>
<dbReference type="PDB" id="4QY8">
    <property type="method" value="X-ray"/>
    <property type="resolution" value="1.35 A"/>
    <property type="chains" value="Q=33-49"/>
</dbReference>
<dbReference type="PDB" id="4QYO">
    <property type="method" value="X-ray"/>
    <property type="resolution" value="1.21 A"/>
    <property type="chains" value="Q=33-41"/>
</dbReference>
<dbReference type="PDB" id="4R3S">
    <property type="method" value="X-ray"/>
    <property type="resolution" value="1.70 A"/>
    <property type="chains" value="Q=30-42"/>
</dbReference>
<dbReference type="PDB" id="5TBD">
    <property type="method" value="X-ray"/>
    <property type="resolution" value="2.20 A"/>
    <property type="chains" value="C/H/I/L=233-240"/>
</dbReference>
<dbReference type="PDBsum" id="2MU8"/>
<dbReference type="PDBsum" id="4QY8"/>
<dbReference type="PDBsum" id="4QYO"/>
<dbReference type="PDBsum" id="4R3S"/>
<dbReference type="PDBsum" id="5TBD"/>
<dbReference type="BMRB" id="P50498"/>
<dbReference type="SMR" id="P50498"/>
<dbReference type="BioGRID" id="1207980">
    <property type="interactions" value="13"/>
</dbReference>
<dbReference type="IntAct" id="P50498">
    <property type="interactions" value="10"/>
</dbReference>
<dbReference type="STRING" id="36329.P50498"/>
<dbReference type="GlyCosmos" id="P50498">
    <property type="glycosylation" value="6 sites, No reported glycans"/>
</dbReference>
<dbReference type="PaxDb" id="5833-PFB0300c"/>
<dbReference type="ABCD" id="P50498">
    <property type="antibodies" value="2 sequenced antibodies"/>
</dbReference>
<dbReference type="EnsemblProtists" id="CZT98080">
    <property type="protein sequence ID" value="CZT98080"/>
    <property type="gene ID" value="PF3D7_0206800"/>
</dbReference>
<dbReference type="GeneID" id="812660"/>
<dbReference type="KEGG" id="pfa:PF3D7_0206800"/>
<dbReference type="VEuPathDB" id="PlasmoDB:PF3D7_0206800"/>
<dbReference type="HOGENOM" id="CLU_1024782_0_0_1"/>
<dbReference type="OMA" id="PIENNSA"/>
<dbReference type="OrthoDB" id="10642450at2759"/>
<dbReference type="EvolutionaryTrace" id="P50498"/>
<dbReference type="Proteomes" id="UP000001450">
    <property type="component" value="Chromosome 2"/>
</dbReference>
<dbReference type="GO" id="GO:0005886">
    <property type="term" value="C:plasma membrane"/>
    <property type="evidence" value="ECO:0007669"/>
    <property type="project" value="UniProtKB-SubCell"/>
</dbReference>
<dbReference type="GO" id="GO:0098552">
    <property type="term" value="C:side of membrane"/>
    <property type="evidence" value="ECO:0007669"/>
    <property type="project" value="UniProtKB-KW"/>
</dbReference>
<dbReference type="GO" id="GO:0007155">
    <property type="term" value="P:cell adhesion"/>
    <property type="evidence" value="ECO:0007669"/>
    <property type="project" value="InterPro"/>
</dbReference>
<dbReference type="DisProt" id="DP02299"/>
<dbReference type="InterPro" id="IPR001136">
    <property type="entry name" value="MSA2"/>
</dbReference>
<dbReference type="Pfam" id="PF00985">
    <property type="entry name" value="MSA_2"/>
    <property type="match status" value="1"/>
</dbReference>
<dbReference type="PIRSF" id="PIRSF003575">
    <property type="entry name" value="MSA_2"/>
    <property type="match status" value="1"/>
</dbReference>
<proteinExistence type="evidence at protein level"/>
<reference key="1">
    <citation type="journal article" date="1990" name="Mol. Biochem. Parasitol.">
        <title>Structural diversity in the 45-kilodalton merozoite surface antigen of Plasmodium falciparum.</title>
        <authorList>
            <person name="Smythe J.A."/>
            <person name="Peterson M.G."/>
            <person name="Coppel R.L."/>
            <person name="Saul A.J."/>
            <person name="Kemp D.J."/>
            <person name="Anders R.F."/>
        </authorList>
    </citation>
    <scope>NUCLEOTIDE SEQUENCE [GENOMIC DNA]</scope>
    <scope>POLYMORPHISM</scope>
    <scope>REPEATS</scope>
</reference>
<reference key="2">
    <citation type="journal article" date="1998" name="Science">
        <title>Chromosome 2 sequence of the human malaria parasite Plasmodium falciparum.</title>
        <authorList>
            <person name="Gardner M.J."/>
            <person name="Tettelin H."/>
            <person name="Carucci D.J."/>
            <person name="Cummings L.M."/>
            <person name="Aravind L."/>
            <person name="Koonin E.V."/>
            <person name="Shallom S.J."/>
            <person name="Mason T."/>
            <person name="Yu K."/>
            <person name="Fujii C."/>
            <person name="Pederson J."/>
            <person name="Shen K."/>
            <person name="Jing J."/>
            <person name="Aston C."/>
            <person name="Lai Z."/>
            <person name="Schwartz D.C."/>
            <person name="Pertea M."/>
            <person name="Salzberg S.L."/>
            <person name="Zhou L."/>
            <person name="Sutton G.G."/>
            <person name="Clayton R."/>
            <person name="White O."/>
            <person name="Smith H.O."/>
            <person name="Fraser C.M."/>
            <person name="Adams M.D."/>
            <person name="Venter J.C."/>
            <person name="Hoffman S.L."/>
        </authorList>
    </citation>
    <scope>NUCLEOTIDE SEQUENCE [LARGE SCALE GENOMIC DNA]</scope>
    <source>
        <strain>3D7</strain>
    </source>
</reference>
<reference key="3">
    <citation type="journal article" date="2002" name="Nature">
        <title>Genome sequence of the human malaria parasite Plasmodium falciparum.</title>
        <authorList>
            <person name="Gardner M.J."/>
            <person name="Hall N."/>
            <person name="Fung E."/>
            <person name="White O."/>
            <person name="Berriman M."/>
            <person name="Hyman R.W."/>
            <person name="Carlton J.M."/>
            <person name="Pain A."/>
            <person name="Nelson K.E."/>
            <person name="Bowman S."/>
            <person name="Paulsen I.T."/>
            <person name="James K.D."/>
            <person name="Eisen J.A."/>
            <person name="Rutherford K.M."/>
            <person name="Salzberg S.L."/>
            <person name="Craig A."/>
            <person name="Kyes S."/>
            <person name="Chan M.-S."/>
            <person name="Nene V."/>
            <person name="Shallom S.J."/>
            <person name="Suh B."/>
            <person name="Peterson J."/>
            <person name="Angiuoli S."/>
            <person name="Pertea M."/>
            <person name="Allen J."/>
            <person name="Selengut J."/>
            <person name="Haft D."/>
            <person name="Mather M.W."/>
            <person name="Vaidya A.B."/>
            <person name="Martin D.M.A."/>
            <person name="Fairlamb A.H."/>
            <person name="Fraunholz M.J."/>
            <person name="Roos D.S."/>
            <person name="Ralph S.A."/>
            <person name="McFadden G.I."/>
            <person name="Cummings L.M."/>
            <person name="Subramanian G.M."/>
            <person name="Mungall C."/>
            <person name="Venter J.C."/>
            <person name="Carucci D.J."/>
            <person name="Hoffman S.L."/>
            <person name="Newbold C."/>
            <person name="Davis R.W."/>
            <person name="Fraser C.M."/>
            <person name="Barrell B.G."/>
        </authorList>
    </citation>
    <scope>NUCLEOTIDE SEQUENCE [LARGE SCALE GENOMIC DNA]</scope>
    <source>
        <strain>3D7</strain>
    </source>
</reference>
<reference key="4">
    <citation type="journal article" date="2008" name="J. Mol. Biol.">
        <title>Solution conformation, backbone dynamics and lipid interactions of the intrinsically unstructured malaria surface protein MSP2.</title>
        <authorList>
            <person name="Zhang X."/>
            <person name="Perugini M.A."/>
            <person name="Yao S."/>
            <person name="Adda C.G."/>
            <person name="Murphy V.J."/>
            <person name="Low A."/>
            <person name="Anders R.F."/>
            <person name="Norton R.S."/>
        </authorList>
    </citation>
    <scope>DOMAIN</scope>
</reference>
<reference key="5">
    <citation type="journal article" date="2009" name="Vaccine">
        <title>Evaluation of two long synthetic merozoite surface protein 2 peptides as malaria vaccine candidates.</title>
        <authorList>
            <person name="Flueck C."/>
            <person name="Frank G."/>
            <person name="Smith T."/>
            <person name="Jafarshad A."/>
            <person name="Nebie I."/>
            <person name="Sirima S.B."/>
            <person name="Olugbile S."/>
            <person name="Alonso P."/>
            <person name="Tanner M."/>
            <person name="Druilhe P."/>
            <person name="Felger I."/>
            <person name="Corradin G."/>
        </authorList>
    </citation>
    <scope>FUNCTION</scope>
    <scope>SUBCELLULAR LOCATION</scope>
    <scope>DEVELOPMENTAL STAGE</scope>
    <scope>BIOTECHNOLOGY</scope>
</reference>
<reference key="6">
    <citation type="journal article" date="2014" name="Infect. Immun.">
        <title>Sequential processing of merozoite surface proteins during and after erythrocyte invasion by Plasmodium falciparum.</title>
        <authorList>
            <person name="Boyle M.J."/>
            <person name="Langer C."/>
            <person name="Chan J.A."/>
            <person name="Hodder A.N."/>
            <person name="Coppel R.L."/>
            <person name="Anders R.F."/>
            <person name="Beeson J.G."/>
        </authorList>
    </citation>
    <scope>FUNCTION</scope>
    <scope>SUBCELLULAR LOCATION</scope>
    <scope>DEVELOPMENTAL STAGE</scope>
    <scope>BIOTECHNOLOGY</scope>
</reference>
<reference evidence="14" key="7">
    <citation type="journal article" date="2003" name="J. Med. Chem.">
        <title>Distorting malaria peptide backbone structure to enable fitting into MHC class II molecules renders modified peptides immunogenic and protective.</title>
        <authorList>
            <person name="Cifuentes G."/>
            <person name="Patarroyo M.E."/>
            <person name="Urquiza M."/>
            <person name="Ramirez L.E."/>
            <person name="Reyes C."/>
            <person name="Rodriguez R."/>
        </authorList>
    </citation>
    <scope>STRUCTURE BY NMR OF 21-40</scope>
</reference>
<reference evidence="15 16 17" key="8">
    <citation type="journal article" date="2015" name="Sci. Rep.">
        <title>Structural basis for epitope masking and strain specificity of a conserved epitope in an intrinsically disordered malaria vaccine candidate.</title>
        <authorList>
            <person name="Morales R.A.V."/>
            <person name="MacRaild C.A."/>
            <person name="Seow J."/>
            <person name="Krishnarjuna B."/>
            <person name="Drinkwater N."/>
            <person name="Rouet R."/>
            <person name="Anders R.F."/>
            <person name="Christ D."/>
            <person name="McGowan S."/>
            <person name="Norton R.S."/>
        </authorList>
    </citation>
    <scope>X-RAY CRYSTALLOGRAPHY (1.35 ANGSTROMS) OF 33-49 IN COMPLEX WITH ANTIBODIES</scope>
</reference>
<reference evidence="18" key="9">
    <citation type="journal article" date="2017" name="J. Mol. Biol.">
        <title>Structure and Characterisation of a Key Epitope in the Conserved C-Terminal Domain of the Malaria Vaccine Candidate MSP2.</title>
        <authorList>
            <person name="Seow J."/>
            <person name="Morales R.A."/>
            <person name="MacRaild C.A."/>
            <person name="Krishnarjuna B."/>
            <person name="McGowan S."/>
            <person name="Dingjan T."/>
            <person name="Jaipuria G."/>
            <person name="Rouet R."/>
            <person name="Wilde K.L."/>
            <person name="Atreya H.S."/>
            <person name="Richards J.S."/>
            <person name="Anders R.F."/>
            <person name="Christ D."/>
            <person name="Drinkwater N."/>
            <person name="Norton R.S."/>
        </authorList>
    </citation>
    <scope>X-RAY CRYSTALLOGRAPHY (2.20 ANGSTROMS) OF 233-240 IN COMPLEX WITH ANTIBODIES</scope>
    <scope>BIOTECHNOLOGY</scope>
</reference>
<name>MSA2_PLAF7</name>
<sequence length="272" mass="27957">MKVIKTLSIINFFIFVTFNIKNESKYSNTFINNAYNMSIRRSMAESKPSTGAGGSAGGSAGGSAGGSAGGSAGGSAGSGDGNGADAEGSSSTPATTTTTKTTTTTTTTNDAEASTSTSSENPNHKNAETNPKGKGEVQEPNQANKETQNNSNVQQDSQTKSNVPPTQDADTKSPTAQPEQAENSAPTAEQTESPELQSAPENKGTGQHGHMHGSRNNHPQNTSDSQKECTDGNKENCGAATSLLNNSSNIASINKFVVLISATLVLSFAIFI</sequence>